<feature type="chain" id="PRO_1000001298" description="LexA repressor">
    <location>
        <begin position="1"/>
        <end position="203"/>
    </location>
</feature>
<feature type="DNA-binding region" description="H-T-H motif" evidence="1">
    <location>
        <begin position="28"/>
        <end position="47"/>
    </location>
</feature>
<feature type="active site" description="For autocatalytic cleavage activity" evidence="1">
    <location>
        <position position="127"/>
    </location>
</feature>
<feature type="active site" description="For autocatalytic cleavage activity" evidence="1">
    <location>
        <position position="164"/>
    </location>
</feature>
<feature type="site" description="Cleavage; by autolysis" evidence="1">
    <location>
        <begin position="91"/>
        <end position="92"/>
    </location>
</feature>
<organism>
    <name type="scientific">Leptospira borgpetersenii serovar Hardjo-bovis (strain JB197)</name>
    <dbReference type="NCBI Taxonomy" id="355277"/>
    <lineage>
        <taxon>Bacteria</taxon>
        <taxon>Pseudomonadati</taxon>
        <taxon>Spirochaetota</taxon>
        <taxon>Spirochaetia</taxon>
        <taxon>Leptospirales</taxon>
        <taxon>Leptospiraceae</taxon>
        <taxon>Leptospira</taxon>
    </lineage>
</organism>
<proteinExistence type="inferred from homology"/>
<name>LEXA_LEPBJ</name>
<accession>Q04RH1</accession>
<reference key="1">
    <citation type="journal article" date="2006" name="Proc. Natl. Acad. Sci. U.S.A.">
        <title>Genome reduction in Leptospira borgpetersenii reflects limited transmission potential.</title>
        <authorList>
            <person name="Bulach D.M."/>
            <person name="Zuerner R.L."/>
            <person name="Wilson P."/>
            <person name="Seemann T."/>
            <person name="McGrath A."/>
            <person name="Cullen P.A."/>
            <person name="Davis J."/>
            <person name="Johnson M."/>
            <person name="Kuczek E."/>
            <person name="Alt D.P."/>
            <person name="Peterson-Burch B."/>
            <person name="Coppel R.L."/>
            <person name="Rood J.I."/>
            <person name="Davies J.K."/>
            <person name="Adler B."/>
        </authorList>
    </citation>
    <scope>NUCLEOTIDE SEQUENCE [LARGE SCALE GENOMIC DNA]</scope>
    <source>
        <strain>JB197</strain>
    </source>
</reference>
<comment type="function">
    <text evidence="1">Represses a number of genes involved in the response to DNA damage (SOS response), including recA and lexA. In the presence of single-stranded DNA, RecA interacts with LexA causing an autocatalytic cleavage which disrupts the DNA-binding part of LexA, leading to derepression of the SOS regulon and eventually DNA repair.</text>
</comment>
<comment type="catalytic activity">
    <reaction evidence="1">
        <text>Hydrolysis of Ala-|-Gly bond in repressor LexA.</text>
        <dbReference type="EC" id="3.4.21.88"/>
    </reaction>
</comment>
<comment type="subunit">
    <text evidence="1">Homodimer.</text>
</comment>
<comment type="similarity">
    <text evidence="1">Belongs to the peptidase S24 family.</text>
</comment>
<protein>
    <recommendedName>
        <fullName evidence="1">LexA repressor</fullName>
        <ecNumber evidence="1">3.4.21.88</ecNumber>
    </recommendedName>
</protein>
<evidence type="ECO:0000255" key="1">
    <source>
        <dbReference type="HAMAP-Rule" id="MF_00015"/>
    </source>
</evidence>
<keyword id="KW-0068">Autocatalytic cleavage</keyword>
<keyword id="KW-0227">DNA damage</keyword>
<keyword id="KW-0234">DNA repair</keyword>
<keyword id="KW-0235">DNA replication</keyword>
<keyword id="KW-0238">DNA-binding</keyword>
<keyword id="KW-0378">Hydrolase</keyword>
<keyword id="KW-0678">Repressor</keyword>
<keyword id="KW-0742">SOS response</keyword>
<keyword id="KW-0804">Transcription</keyword>
<keyword id="KW-0805">Transcription regulation</keyword>
<gene>
    <name evidence="1" type="primary">lexA</name>
    <name type="ordered locus">LBJ_1985</name>
</gene>
<sequence length="203" mass="22604">MKDLTDKQQAVLAFITTIIKERGFPPTIREIGDEFGITAKGAYDHLKAIEKKGYLKTAKNQSRAIELIRQSPMESIPVQATSIPVIGRVAAGLPIFADENIESYIPVPDEMAKGNVPMYALRVQGDSMIEVGIDSGDIAIIEKRDIARNGEIVVALIEDEATLKVYYKEQDQIRLEARNPKYKPIKTKKATVIGKLVGLYRIY</sequence>
<dbReference type="EC" id="3.4.21.88" evidence="1"/>
<dbReference type="EMBL" id="CP000350">
    <property type="protein sequence ID" value="ABJ76499.1"/>
    <property type="molecule type" value="Genomic_DNA"/>
</dbReference>
<dbReference type="RefSeq" id="WP_002736209.1">
    <property type="nucleotide sequence ID" value="NC_008510.1"/>
</dbReference>
<dbReference type="SMR" id="Q04RH1"/>
<dbReference type="MEROPS" id="S24.001"/>
<dbReference type="GeneID" id="61173700"/>
<dbReference type="KEGG" id="lbj:LBJ_1985"/>
<dbReference type="HOGENOM" id="CLU_066192_45_1_12"/>
<dbReference type="Proteomes" id="UP000000656">
    <property type="component" value="Chromosome 1"/>
</dbReference>
<dbReference type="GO" id="GO:0003677">
    <property type="term" value="F:DNA binding"/>
    <property type="evidence" value="ECO:0007669"/>
    <property type="project" value="UniProtKB-UniRule"/>
</dbReference>
<dbReference type="GO" id="GO:0004252">
    <property type="term" value="F:serine-type endopeptidase activity"/>
    <property type="evidence" value="ECO:0007669"/>
    <property type="project" value="UniProtKB-UniRule"/>
</dbReference>
<dbReference type="GO" id="GO:0006281">
    <property type="term" value="P:DNA repair"/>
    <property type="evidence" value="ECO:0007669"/>
    <property type="project" value="UniProtKB-UniRule"/>
</dbReference>
<dbReference type="GO" id="GO:0006260">
    <property type="term" value="P:DNA replication"/>
    <property type="evidence" value="ECO:0007669"/>
    <property type="project" value="UniProtKB-UniRule"/>
</dbReference>
<dbReference type="GO" id="GO:0045892">
    <property type="term" value="P:negative regulation of DNA-templated transcription"/>
    <property type="evidence" value="ECO:0007669"/>
    <property type="project" value="UniProtKB-UniRule"/>
</dbReference>
<dbReference type="GO" id="GO:0006508">
    <property type="term" value="P:proteolysis"/>
    <property type="evidence" value="ECO:0007669"/>
    <property type="project" value="InterPro"/>
</dbReference>
<dbReference type="GO" id="GO:0009432">
    <property type="term" value="P:SOS response"/>
    <property type="evidence" value="ECO:0007669"/>
    <property type="project" value="UniProtKB-UniRule"/>
</dbReference>
<dbReference type="CDD" id="cd06529">
    <property type="entry name" value="S24_LexA-like"/>
    <property type="match status" value="1"/>
</dbReference>
<dbReference type="FunFam" id="1.10.10.10:FF:000009">
    <property type="entry name" value="LexA repressor"/>
    <property type="match status" value="1"/>
</dbReference>
<dbReference type="FunFam" id="2.10.109.10:FF:000001">
    <property type="entry name" value="LexA repressor"/>
    <property type="match status" value="1"/>
</dbReference>
<dbReference type="Gene3D" id="2.10.109.10">
    <property type="entry name" value="Umud Fragment, subunit A"/>
    <property type="match status" value="1"/>
</dbReference>
<dbReference type="Gene3D" id="1.10.10.10">
    <property type="entry name" value="Winged helix-like DNA-binding domain superfamily/Winged helix DNA-binding domain"/>
    <property type="match status" value="1"/>
</dbReference>
<dbReference type="HAMAP" id="MF_00015">
    <property type="entry name" value="LexA"/>
    <property type="match status" value="1"/>
</dbReference>
<dbReference type="InterPro" id="IPR006200">
    <property type="entry name" value="LexA"/>
</dbReference>
<dbReference type="InterPro" id="IPR039418">
    <property type="entry name" value="LexA-like"/>
</dbReference>
<dbReference type="InterPro" id="IPR036286">
    <property type="entry name" value="LexA/Signal_pep-like_sf"/>
</dbReference>
<dbReference type="InterPro" id="IPR006199">
    <property type="entry name" value="LexA_DNA-bd_dom"/>
</dbReference>
<dbReference type="InterPro" id="IPR050077">
    <property type="entry name" value="LexA_repressor"/>
</dbReference>
<dbReference type="InterPro" id="IPR006197">
    <property type="entry name" value="Peptidase_S24_LexA"/>
</dbReference>
<dbReference type="InterPro" id="IPR015927">
    <property type="entry name" value="Peptidase_S24_S26A/B/C"/>
</dbReference>
<dbReference type="InterPro" id="IPR036388">
    <property type="entry name" value="WH-like_DNA-bd_sf"/>
</dbReference>
<dbReference type="InterPro" id="IPR036390">
    <property type="entry name" value="WH_DNA-bd_sf"/>
</dbReference>
<dbReference type="NCBIfam" id="TIGR00498">
    <property type="entry name" value="lexA"/>
    <property type="match status" value="1"/>
</dbReference>
<dbReference type="PANTHER" id="PTHR33516">
    <property type="entry name" value="LEXA REPRESSOR"/>
    <property type="match status" value="1"/>
</dbReference>
<dbReference type="PANTHER" id="PTHR33516:SF2">
    <property type="entry name" value="LEXA REPRESSOR-RELATED"/>
    <property type="match status" value="1"/>
</dbReference>
<dbReference type="Pfam" id="PF01726">
    <property type="entry name" value="LexA_DNA_bind"/>
    <property type="match status" value="1"/>
</dbReference>
<dbReference type="Pfam" id="PF00717">
    <property type="entry name" value="Peptidase_S24"/>
    <property type="match status" value="1"/>
</dbReference>
<dbReference type="PRINTS" id="PR00726">
    <property type="entry name" value="LEXASERPTASE"/>
</dbReference>
<dbReference type="SUPFAM" id="SSF51306">
    <property type="entry name" value="LexA/Signal peptidase"/>
    <property type="match status" value="1"/>
</dbReference>
<dbReference type="SUPFAM" id="SSF46785">
    <property type="entry name" value="Winged helix' DNA-binding domain"/>
    <property type="match status" value="1"/>
</dbReference>